<proteinExistence type="evidence at protein level"/>
<sequence length="937" mass="104216">MRALPTTATTLLGVLFFPSASRSQYVRDLGTEQWTLSSATLNRTVPAQFPSQVHMDLLREGIIDEPYNDLNDFNLRWIADANWTYTSGKIEGLGEDYESTWLVFDGLDTFASISFCGQFVGATDNQFRQYMFDVSSILKACPEEPTLGIQFGSAPNIVDAIAQDPSSPTWPEGVQITYEYPNRWFMRKEQSDFGWDWGPAFAPAGPWKPGYVVQLKQAAPVYVRNTDLDIYRLGQINYLPPDQTQPWVVNASLDYLGSLPENPSMAIEVKDLQSGEILASRPLTNITVTEGSVTGVTVLEGVDPKLWWPQGLGDQNLYNVTISVTDGGNQSVAEVTKRTGFRTIFLNQRNITDAQLAQGIAPGANWHFEVNGHEFYAKGSNLIPPDCFWTRVTEDTMTRLFDAVVAGNQNMLRVWSSGAYLHDYIYDLADEKGILLCSEFQFSDALYPTDDAFLENVAAEVVYNVRRVNHHPSLALWAGGNEIESLMLLLVEAADPESYPFYVGEYEKMYISLFLPLVYENTRSISYSPSSTTEGYLDIDLSAPVPMAERYSNTTEGEYYGDTDHYNYDASIAFDYGTYPVGRFANEFGFHSMPSLQTWQQALTDPADLTFNSSVVMLRNHHYPAGGLMTDNYHNTVARHGRNDPGRAGLLPDAQHSVRPRGQLQRLVPRDPALPGGPLQVTNPVLPAGQRAARTPARVPVLAARGHLAGALVGGDRVRRPLEGPHYVARDIYKPVIVSPFWNYTTGALDIYVTSDLWTAAAGSVTLTWRDLSGKPIASNGGLPTKPLPFHVGALNSTRLYRMNMKQQPLPRHEDAILALELTATGSLPNTDEEVTFTHEQWFTPAFPKDLDLVNLRVRVEYDAPLGKFAVEATAGVALYTWLEHPEGVVGYFEENSFVVVPGQKKVVGFVVQADETDGEWVHDVTVRSLWDLNEGE</sequence>
<protein>
    <recommendedName>
        <fullName>Beta-mannosidase A</fullName>
        <ecNumber>3.2.1.25</ecNumber>
    </recommendedName>
    <alternativeName>
        <fullName>Mannanase A</fullName>
        <shortName>Mannase A</shortName>
    </alternativeName>
</protein>
<accession>O74168</accession>
<evidence type="ECO:0000250" key="1"/>
<evidence type="ECO:0000255" key="2"/>
<evidence type="ECO:0000269" key="3">
    <source>
    </source>
</evidence>
<evidence type="ECO:0000269" key="4">
    <source ref="2"/>
</evidence>
<evidence type="ECO:0000305" key="5"/>
<name>MANBA_ASPAC</name>
<feature type="signal peptide" evidence="2">
    <location>
        <begin position="1"/>
        <end position="23"/>
    </location>
</feature>
<feature type="chain" id="PRO_0000394642" description="Beta-mannosidase A">
    <location>
        <begin position="24"/>
        <end position="937"/>
    </location>
</feature>
<feature type="active site" description="Proton donor" evidence="1">
    <location>
        <position position="482"/>
    </location>
</feature>
<feature type="glycosylation site" description="N-linked (GlcNAc...) asparagine" evidence="2">
    <location>
        <position position="42"/>
    </location>
</feature>
<feature type="glycosylation site" description="N-linked (GlcNAc...) asparagine" evidence="2">
    <location>
        <position position="82"/>
    </location>
</feature>
<feature type="glycosylation site" description="N-linked (GlcNAc...) asparagine" evidence="2">
    <location>
        <position position="250"/>
    </location>
</feature>
<feature type="glycosylation site" description="N-linked (GlcNAc...) asparagine" evidence="2">
    <location>
        <position position="285"/>
    </location>
</feature>
<feature type="glycosylation site" description="N-linked (GlcNAc...) asparagine" evidence="2">
    <location>
        <position position="319"/>
    </location>
</feature>
<feature type="glycosylation site" description="N-linked (GlcNAc...) asparagine" evidence="2">
    <location>
        <position position="329"/>
    </location>
</feature>
<feature type="glycosylation site" description="N-linked (GlcNAc...) asparagine" evidence="2">
    <location>
        <position position="350"/>
    </location>
</feature>
<feature type="glycosylation site" description="N-linked (GlcNAc...) asparagine" evidence="2">
    <location>
        <position position="553"/>
    </location>
</feature>
<feature type="glycosylation site" description="N-linked (GlcNAc...) asparagine" evidence="2">
    <location>
        <position position="612"/>
    </location>
</feature>
<feature type="glycosylation site" description="N-linked (GlcNAc...) asparagine" evidence="2">
    <location>
        <position position="743"/>
    </location>
</feature>
<feature type="glycosylation site" description="N-linked (GlcNAc...) asparagine" evidence="2">
    <location>
        <position position="796"/>
    </location>
</feature>
<comment type="function">
    <text evidence="4">Exoglycosidase that cleaves the single beta-linked mannose residue from the non-reducing end of beta-mannosidic oligosaccharides of various complexity and length. Involved in the degradation of polymeric mannan and galactomannan. Releases the terminal mannose residue from mannotriose and is somewaht less active on other mannooligosaccharides.</text>
</comment>
<comment type="catalytic activity">
    <reaction evidence="4">
        <text>Hydrolysis of terminal, non-reducing beta-D-mannose residues in beta-D-mannosides.</text>
        <dbReference type="EC" id="3.2.1.25"/>
    </reaction>
</comment>
<comment type="biophysicochemical properties">
    <phDependence>
        <text evidence="4">Optimum pH is 2.0. Stable from pH 4 to pH 7.</text>
    </phDependence>
    <temperatureDependence>
        <text evidence="4">Optimum temperature is 70 degrees Celsius.</text>
    </temperatureDependence>
</comment>
<comment type="pathway">
    <text>Glycan metabolism; N-glycan degradation.</text>
</comment>
<comment type="subunit">
    <text evidence="1">Homodimer.</text>
</comment>
<comment type="subcellular location">
    <subcellularLocation>
        <location evidence="3 4">Secreted</location>
    </subcellularLocation>
</comment>
<comment type="PTM">
    <text evidence="3">N-glycosylated.</text>
</comment>
<comment type="similarity">
    <text evidence="5">Belongs to the glycosyl hydrolase 2 family. Beta-mannosidase A subfamily.</text>
</comment>
<gene>
    <name type="primary">mndA</name>
    <name type="synonym">manB</name>
</gene>
<keyword id="KW-0119">Carbohydrate metabolism</keyword>
<keyword id="KW-0903">Direct protein sequencing</keyword>
<keyword id="KW-0325">Glycoprotein</keyword>
<keyword id="KW-0326">Glycosidase</keyword>
<keyword id="KW-0378">Hydrolase</keyword>
<keyword id="KW-0624">Polysaccharide degradation</keyword>
<keyword id="KW-0964">Secreted</keyword>
<keyword id="KW-0732">Signal</keyword>
<reference key="1">
    <citation type="journal article" date="1999" name="Biosci. Biotechnol. Biochem.">
        <title>Cloning and sequencing of beta-mannosidase gene from Aspergillus aculeatus no. F-50.</title>
        <authorList>
            <person name="Takada G."/>
            <person name="Kawaguchi T."/>
            <person name="Kaga T."/>
            <person name="Sumitani J."/>
            <person name="Arai M."/>
        </authorList>
    </citation>
    <scope>NUCLEOTIDE SEQUENCE [GENOMIC DNA]</scope>
    <scope>PROTEIN SEQUENCE OF 55-71; 186-189; 265-274; 411-424 AND 805-819</scope>
    <scope>GLYCOSYLATION</scope>
    <scope>SUBCELLULAR LOCATION</scope>
    <source>
        <strain>F-50</strain>
    </source>
</reference>
<reference key="2">
    <citation type="journal article" date="1995" name="J. Appl. Glycosci.">
        <title>Purification and properties of a beta-mannosidase from Aspergillus aculeatus.</title>
        <authorList>
            <person name="Arai M."/>
            <person name="Fujimoto H."/>
            <person name="Ooi T."/>
            <person name="Ogura S."/>
            <person name="Murao S."/>
        </authorList>
    </citation>
    <scope>FUNCTION</scope>
    <scope>CATALYTIC ACTIVITY</scope>
    <scope>BIOPHYSICOCHEMICAL PROPERTIES</scope>
    <scope>SUBCELLULAR LOCATION</scope>
    <source>
        <strain>F-50</strain>
    </source>
</reference>
<organism>
    <name type="scientific">Aspergillus aculeatus</name>
    <dbReference type="NCBI Taxonomy" id="5053"/>
    <lineage>
        <taxon>Eukaryota</taxon>
        <taxon>Fungi</taxon>
        <taxon>Dikarya</taxon>
        <taxon>Ascomycota</taxon>
        <taxon>Pezizomycotina</taxon>
        <taxon>Eurotiomycetes</taxon>
        <taxon>Eurotiomycetidae</taxon>
        <taxon>Eurotiales</taxon>
        <taxon>Aspergillaceae</taxon>
        <taxon>Aspergillus</taxon>
        <taxon>Aspergillus subgen. Circumdati</taxon>
    </lineage>
</organism>
<dbReference type="EC" id="3.2.1.25"/>
<dbReference type="EMBL" id="AB015509">
    <property type="protein sequence ID" value="BAA29029.1"/>
    <property type="molecule type" value="Genomic_DNA"/>
</dbReference>
<dbReference type="SMR" id="O74168"/>
<dbReference type="CAZy" id="GH2">
    <property type="family name" value="Glycoside Hydrolase Family 2"/>
</dbReference>
<dbReference type="GlyCosmos" id="O74168">
    <property type="glycosylation" value="11 sites, No reported glycans"/>
</dbReference>
<dbReference type="VEuPathDB" id="FungiDB:ASPACDRAFT_39980"/>
<dbReference type="UniPathway" id="UPA00280"/>
<dbReference type="GO" id="GO:0005576">
    <property type="term" value="C:extracellular region"/>
    <property type="evidence" value="ECO:0007669"/>
    <property type="project" value="UniProtKB-SubCell"/>
</dbReference>
<dbReference type="GO" id="GO:0004567">
    <property type="term" value="F:beta-mannosidase activity"/>
    <property type="evidence" value="ECO:0007669"/>
    <property type="project" value="UniProtKB-EC"/>
</dbReference>
<dbReference type="GO" id="GO:0006516">
    <property type="term" value="P:glycoprotein catabolic process"/>
    <property type="evidence" value="ECO:0007669"/>
    <property type="project" value="TreeGrafter"/>
</dbReference>
<dbReference type="GO" id="GO:0000272">
    <property type="term" value="P:polysaccharide catabolic process"/>
    <property type="evidence" value="ECO:0007669"/>
    <property type="project" value="UniProtKB-KW"/>
</dbReference>
<dbReference type="FunFam" id="2.60.120.260:FF:000200">
    <property type="entry name" value="Beta-mannosidase A"/>
    <property type="match status" value="1"/>
</dbReference>
<dbReference type="FunFam" id="2.60.40.10:FF:001511">
    <property type="entry name" value="Beta-mannosidase A"/>
    <property type="match status" value="1"/>
</dbReference>
<dbReference type="FunFam" id="2.60.40.10:FF:002310">
    <property type="entry name" value="Beta-mannosidase A"/>
    <property type="match status" value="1"/>
</dbReference>
<dbReference type="Gene3D" id="2.60.120.260">
    <property type="entry name" value="Galactose-binding domain-like"/>
    <property type="match status" value="1"/>
</dbReference>
<dbReference type="Gene3D" id="3.20.20.80">
    <property type="entry name" value="Glycosidases"/>
    <property type="match status" value="1"/>
</dbReference>
<dbReference type="Gene3D" id="2.60.40.10">
    <property type="entry name" value="Immunoglobulins"/>
    <property type="match status" value="3"/>
</dbReference>
<dbReference type="InterPro" id="IPR036156">
    <property type="entry name" value="Beta-gal/glucu_dom_sf"/>
</dbReference>
<dbReference type="InterPro" id="IPR054593">
    <property type="entry name" value="Beta-mannosidase-like_N2"/>
</dbReference>
<dbReference type="InterPro" id="IPR050887">
    <property type="entry name" value="Beta-mannosidase_GH2"/>
</dbReference>
<dbReference type="InterPro" id="IPR041625">
    <property type="entry name" value="Beta-mannosidase_Ig"/>
</dbReference>
<dbReference type="InterPro" id="IPR008979">
    <property type="entry name" value="Galactose-bd-like_sf"/>
</dbReference>
<dbReference type="InterPro" id="IPR006102">
    <property type="entry name" value="Glyco_hydro_2_Ig-like"/>
</dbReference>
<dbReference type="InterPro" id="IPR017853">
    <property type="entry name" value="Glycoside_hydrolase_SF"/>
</dbReference>
<dbReference type="InterPro" id="IPR013783">
    <property type="entry name" value="Ig-like_fold"/>
</dbReference>
<dbReference type="InterPro" id="IPR041447">
    <property type="entry name" value="Mannosidase_ig"/>
</dbReference>
<dbReference type="PANTHER" id="PTHR43730">
    <property type="entry name" value="BETA-MANNOSIDASE"/>
    <property type="match status" value="1"/>
</dbReference>
<dbReference type="PANTHER" id="PTHR43730:SF5">
    <property type="entry name" value="BETA-MANNOSIDASE A"/>
    <property type="match status" value="1"/>
</dbReference>
<dbReference type="Pfam" id="PF00703">
    <property type="entry name" value="Glyco_hydro_2"/>
    <property type="match status" value="1"/>
</dbReference>
<dbReference type="Pfam" id="PF22666">
    <property type="entry name" value="Glyco_hydro_2_N2"/>
    <property type="match status" value="1"/>
</dbReference>
<dbReference type="Pfam" id="PF17753">
    <property type="entry name" value="Ig_mannosidase"/>
    <property type="match status" value="1"/>
</dbReference>
<dbReference type="Pfam" id="PF17786">
    <property type="entry name" value="Mannosidase_ig"/>
    <property type="match status" value="1"/>
</dbReference>
<dbReference type="SUPFAM" id="SSF51445">
    <property type="entry name" value="(Trans)glycosidases"/>
    <property type="match status" value="1"/>
</dbReference>
<dbReference type="SUPFAM" id="SSF49303">
    <property type="entry name" value="beta-Galactosidase/glucuronidase domain"/>
    <property type="match status" value="1"/>
</dbReference>
<dbReference type="SUPFAM" id="SSF49785">
    <property type="entry name" value="Galactose-binding domain-like"/>
    <property type="match status" value="1"/>
</dbReference>